<keyword id="KW-0028">Amino-acid biosynthesis</keyword>
<keyword id="KW-0963">Cytoplasm</keyword>
<keyword id="KW-0368">Histidine biosynthesis</keyword>
<proteinExistence type="inferred from homology"/>
<evidence type="ECO:0000255" key="1">
    <source>
        <dbReference type="HAMAP-Rule" id="MF_00125"/>
    </source>
</evidence>
<gene>
    <name evidence="1" type="primary">hisZ</name>
    <name type="ordered locus">NMCC_0778</name>
</gene>
<organism>
    <name type="scientific">Neisseria meningitidis serogroup C (strain 053442)</name>
    <dbReference type="NCBI Taxonomy" id="374833"/>
    <lineage>
        <taxon>Bacteria</taxon>
        <taxon>Pseudomonadati</taxon>
        <taxon>Pseudomonadota</taxon>
        <taxon>Betaproteobacteria</taxon>
        <taxon>Neisseriales</taxon>
        <taxon>Neisseriaceae</taxon>
        <taxon>Neisseria</taxon>
    </lineage>
</organism>
<protein>
    <recommendedName>
        <fullName evidence="1">ATP phosphoribosyltransferase regulatory subunit</fullName>
    </recommendedName>
</protein>
<sequence length="383" mass="41765">MQTWQLPEHIADVLPTNARQLESAREQLLALFRVHGYELVQPPLMEYAHSLLTHIDAGLSLKTILVTDRLSGRQLGIRADITPQVARIDAHLLSANQGINRLCYAGPVLHAQPDGLLNMREPLQAGAEMYGFADIRGDIELIDLMLKSMKIADMGKVLLSLGHIGIFRALSDAAHLDAGQSATLLALMQDKDTGAVEAQVKAWKLDGMWAKAFSLLPRLYGGREVLSDARGRLPDLSAVGGALGELQAVCDAFPDCEIHIDLSELRVDNYHTGLLYAAYAADFHDAVARGGRYDGLGGYFGRARPATGFSFDLRSFIGRLPAIERQPAVLVDAEDAEAAREAVEALREQGQCVVIDYGIGHNVSEELAGRLKKTDGVWQVVKR</sequence>
<comment type="function">
    <text evidence="1">Required for the first step of histidine biosynthesis. May allow the feedback regulation of ATP phosphoribosyltransferase activity by histidine.</text>
</comment>
<comment type="pathway">
    <text evidence="1">Amino-acid biosynthesis; L-histidine biosynthesis; L-histidine from 5-phospho-alpha-D-ribose 1-diphosphate: step 1/9.</text>
</comment>
<comment type="subunit">
    <text evidence="1">Heteromultimer composed of HisG and HisZ subunits.</text>
</comment>
<comment type="subcellular location">
    <subcellularLocation>
        <location evidence="1">Cytoplasm</location>
    </subcellularLocation>
</comment>
<comment type="miscellaneous">
    <text>This function is generally fulfilled by the C-terminal part of HisG, which is missing in some bacteria such as this one.</text>
</comment>
<comment type="similarity">
    <text evidence="1">Belongs to the class-II aminoacyl-tRNA synthetase family. HisZ subfamily.</text>
</comment>
<dbReference type="EMBL" id="CP000381">
    <property type="protein sequence ID" value="ABX72971.1"/>
    <property type="molecule type" value="Genomic_DNA"/>
</dbReference>
<dbReference type="RefSeq" id="WP_002251231.1">
    <property type="nucleotide sequence ID" value="NC_010120.1"/>
</dbReference>
<dbReference type="SMR" id="A9M3P6"/>
<dbReference type="KEGG" id="nmn:NMCC_0778"/>
<dbReference type="HOGENOM" id="CLU_025113_0_1_4"/>
<dbReference type="UniPathway" id="UPA00031">
    <property type="reaction ID" value="UER00006"/>
</dbReference>
<dbReference type="Proteomes" id="UP000001177">
    <property type="component" value="Chromosome"/>
</dbReference>
<dbReference type="GO" id="GO:0005737">
    <property type="term" value="C:cytoplasm"/>
    <property type="evidence" value="ECO:0007669"/>
    <property type="project" value="UniProtKB-SubCell"/>
</dbReference>
<dbReference type="GO" id="GO:0004821">
    <property type="term" value="F:histidine-tRNA ligase activity"/>
    <property type="evidence" value="ECO:0007669"/>
    <property type="project" value="TreeGrafter"/>
</dbReference>
<dbReference type="GO" id="GO:0006427">
    <property type="term" value="P:histidyl-tRNA aminoacylation"/>
    <property type="evidence" value="ECO:0007669"/>
    <property type="project" value="TreeGrafter"/>
</dbReference>
<dbReference type="GO" id="GO:0000105">
    <property type="term" value="P:L-histidine biosynthetic process"/>
    <property type="evidence" value="ECO:0007669"/>
    <property type="project" value="UniProtKB-UniRule"/>
</dbReference>
<dbReference type="FunFam" id="3.30.930.10:FF:000096">
    <property type="entry name" value="ATP phosphoribosyltransferase regulatory subunit"/>
    <property type="match status" value="1"/>
</dbReference>
<dbReference type="Gene3D" id="3.30.930.10">
    <property type="entry name" value="Bira Bifunctional Protein, Domain 2"/>
    <property type="match status" value="1"/>
</dbReference>
<dbReference type="HAMAP" id="MF_00125">
    <property type="entry name" value="HisZ"/>
    <property type="match status" value="1"/>
</dbReference>
<dbReference type="InterPro" id="IPR045864">
    <property type="entry name" value="aa-tRNA-synth_II/BPL/LPL"/>
</dbReference>
<dbReference type="InterPro" id="IPR041715">
    <property type="entry name" value="HisRS-like_core"/>
</dbReference>
<dbReference type="InterPro" id="IPR004516">
    <property type="entry name" value="HisRS/HisZ"/>
</dbReference>
<dbReference type="InterPro" id="IPR004517">
    <property type="entry name" value="HisZ"/>
</dbReference>
<dbReference type="NCBIfam" id="NF008935">
    <property type="entry name" value="PRK12292.1-1"/>
    <property type="match status" value="1"/>
</dbReference>
<dbReference type="NCBIfam" id="NF009086">
    <property type="entry name" value="PRK12421.1"/>
    <property type="match status" value="1"/>
</dbReference>
<dbReference type="PANTHER" id="PTHR43707:SF1">
    <property type="entry name" value="HISTIDINE--TRNA LIGASE, MITOCHONDRIAL-RELATED"/>
    <property type="match status" value="1"/>
</dbReference>
<dbReference type="PANTHER" id="PTHR43707">
    <property type="entry name" value="HISTIDYL-TRNA SYNTHETASE"/>
    <property type="match status" value="1"/>
</dbReference>
<dbReference type="Pfam" id="PF13393">
    <property type="entry name" value="tRNA-synt_His"/>
    <property type="match status" value="1"/>
</dbReference>
<dbReference type="PIRSF" id="PIRSF001549">
    <property type="entry name" value="His-tRNA_synth"/>
    <property type="match status" value="1"/>
</dbReference>
<dbReference type="SUPFAM" id="SSF55681">
    <property type="entry name" value="Class II aaRS and biotin synthetases"/>
    <property type="match status" value="1"/>
</dbReference>
<reference key="1">
    <citation type="journal article" date="2008" name="Genomics">
        <title>Characterization of ST-4821 complex, a unique Neisseria meningitidis clone.</title>
        <authorList>
            <person name="Peng J."/>
            <person name="Yang L."/>
            <person name="Yang F."/>
            <person name="Yang J."/>
            <person name="Yan Y."/>
            <person name="Nie H."/>
            <person name="Zhang X."/>
            <person name="Xiong Z."/>
            <person name="Jiang Y."/>
            <person name="Cheng F."/>
            <person name="Xu X."/>
            <person name="Chen S."/>
            <person name="Sun L."/>
            <person name="Li W."/>
            <person name="Shen Y."/>
            <person name="Shao Z."/>
            <person name="Liang X."/>
            <person name="Xu J."/>
            <person name="Jin Q."/>
        </authorList>
    </citation>
    <scope>NUCLEOTIDE SEQUENCE [LARGE SCALE GENOMIC DNA]</scope>
    <source>
        <strain>053442</strain>
    </source>
</reference>
<accession>A9M3P6</accession>
<name>HISZ_NEIM0</name>
<feature type="chain" id="PRO_1000076248" description="ATP phosphoribosyltransferase regulatory subunit">
    <location>
        <begin position="1"/>
        <end position="383"/>
    </location>
</feature>